<organism>
    <name type="scientific">Homo sapiens</name>
    <name type="common">Human</name>
    <dbReference type="NCBI Taxonomy" id="9606"/>
    <lineage>
        <taxon>Eukaryota</taxon>
        <taxon>Metazoa</taxon>
        <taxon>Chordata</taxon>
        <taxon>Craniata</taxon>
        <taxon>Vertebrata</taxon>
        <taxon>Euteleostomi</taxon>
        <taxon>Mammalia</taxon>
        <taxon>Eutheria</taxon>
        <taxon>Euarchontoglires</taxon>
        <taxon>Primates</taxon>
        <taxon>Haplorrhini</taxon>
        <taxon>Catarrhini</taxon>
        <taxon>Hominidae</taxon>
        <taxon>Homo</taxon>
    </lineage>
</organism>
<dbReference type="EMBL" id="AY364261">
    <property type="protein sequence ID" value="AAQ76820.1"/>
    <property type="molecule type" value="mRNA"/>
</dbReference>
<dbReference type="EMBL" id="AY358864">
    <property type="protein sequence ID" value="AAQ89223.1"/>
    <property type="molecule type" value="mRNA"/>
</dbReference>
<dbReference type="EMBL" id="AK001211">
    <property type="protein sequence ID" value="BAA91556.1"/>
    <property type="molecule type" value="mRNA"/>
</dbReference>
<dbReference type="EMBL" id="AK022535">
    <property type="protein sequence ID" value="BAB14084.1"/>
    <property type="molecule type" value="mRNA"/>
</dbReference>
<dbReference type="EMBL" id="AL034380">
    <property type="status" value="NOT_ANNOTATED_CDS"/>
    <property type="molecule type" value="Genomic_DNA"/>
</dbReference>
<dbReference type="EMBL" id="BC007815">
    <property type="protein sequence ID" value="AAH07815.1"/>
    <property type="molecule type" value="mRNA"/>
</dbReference>
<dbReference type="EMBL" id="BC008634">
    <property type="protein sequence ID" value="AAH08634.1"/>
    <property type="molecule type" value="mRNA"/>
</dbReference>
<dbReference type="CCDS" id="CCDS289.1"/>
<dbReference type="RefSeq" id="NP_060536.3">
    <property type="nucleotide sequence ID" value="NM_018066.3"/>
</dbReference>
<dbReference type="SMR" id="Q9H9Y4"/>
<dbReference type="BioGRID" id="120104">
    <property type="interactions" value="25"/>
</dbReference>
<dbReference type="FunCoup" id="Q9H9Y4">
    <property type="interactions" value="616"/>
</dbReference>
<dbReference type="IntAct" id="Q9H9Y4">
    <property type="interactions" value="16"/>
</dbReference>
<dbReference type="STRING" id="9606.ENSP00000363250"/>
<dbReference type="GlyGen" id="Q9H9Y4">
    <property type="glycosylation" value="1 site"/>
</dbReference>
<dbReference type="iPTMnet" id="Q9H9Y4"/>
<dbReference type="PhosphoSitePlus" id="Q9H9Y4"/>
<dbReference type="BioMuta" id="GPN2"/>
<dbReference type="DMDM" id="110832767"/>
<dbReference type="jPOST" id="Q9H9Y4"/>
<dbReference type="MassIVE" id="Q9H9Y4"/>
<dbReference type="PaxDb" id="9606-ENSP00000363250"/>
<dbReference type="PeptideAtlas" id="Q9H9Y4"/>
<dbReference type="ProteomicsDB" id="81368"/>
<dbReference type="Pumba" id="Q9H9Y4"/>
<dbReference type="Antibodypedia" id="30698">
    <property type="antibodies" value="32 antibodies from 12 providers"/>
</dbReference>
<dbReference type="DNASU" id="54707"/>
<dbReference type="Ensembl" id="ENST00000374135.9">
    <property type="protein sequence ID" value="ENSP00000363250.3"/>
    <property type="gene ID" value="ENSG00000142751.15"/>
</dbReference>
<dbReference type="GeneID" id="54707"/>
<dbReference type="KEGG" id="hsa:54707"/>
<dbReference type="MANE-Select" id="ENST00000374135.9">
    <property type="protein sequence ID" value="ENSP00000363250.3"/>
    <property type="RefSeq nucleotide sequence ID" value="NM_018066.4"/>
    <property type="RefSeq protein sequence ID" value="NP_060536.3"/>
</dbReference>
<dbReference type="UCSC" id="uc001bnd.2">
    <property type="organism name" value="human"/>
</dbReference>
<dbReference type="AGR" id="HGNC:25513"/>
<dbReference type="CTD" id="54707"/>
<dbReference type="DisGeNET" id="54707"/>
<dbReference type="GeneCards" id="GPN2"/>
<dbReference type="HGNC" id="HGNC:25513">
    <property type="gene designation" value="GPN2"/>
</dbReference>
<dbReference type="HPA" id="ENSG00000142751">
    <property type="expression patterns" value="Low tissue specificity"/>
</dbReference>
<dbReference type="neXtProt" id="NX_Q9H9Y4"/>
<dbReference type="OpenTargets" id="ENSG00000142751"/>
<dbReference type="PharmGKB" id="PA162390149"/>
<dbReference type="VEuPathDB" id="HostDB:ENSG00000142751"/>
<dbReference type="eggNOG" id="KOG1533">
    <property type="taxonomic scope" value="Eukaryota"/>
</dbReference>
<dbReference type="GeneTree" id="ENSGT00950000183172"/>
<dbReference type="HOGENOM" id="CLU_037460_0_2_1"/>
<dbReference type="InParanoid" id="Q9H9Y4"/>
<dbReference type="OMA" id="ATHNYFL"/>
<dbReference type="OrthoDB" id="5839at2759"/>
<dbReference type="PAN-GO" id="Q9H9Y4">
    <property type="GO annotations" value="1 GO annotation based on evolutionary models"/>
</dbReference>
<dbReference type="PhylomeDB" id="Q9H9Y4"/>
<dbReference type="TreeFam" id="TF300828"/>
<dbReference type="PathwayCommons" id="Q9H9Y4"/>
<dbReference type="SignaLink" id="Q9H9Y4"/>
<dbReference type="BioGRID-ORCS" id="54707">
    <property type="hits" value="826 hits in 1168 CRISPR screens"/>
</dbReference>
<dbReference type="ChiTaRS" id="GPN2">
    <property type="organism name" value="human"/>
</dbReference>
<dbReference type="GenomeRNAi" id="54707"/>
<dbReference type="Pharos" id="Q9H9Y4">
    <property type="development level" value="Tdark"/>
</dbReference>
<dbReference type="PRO" id="PR:Q9H9Y4"/>
<dbReference type="Proteomes" id="UP000005640">
    <property type="component" value="Chromosome 1"/>
</dbReference>
<dbReference type="RNAct" id="Q9H9Y4">
    <property type="molecule type" value="protein"/>
</dbReference>
<dbReference type="Bgee" id="ENSG00000142751">
    <property type="expression patterns" value="Expressed in mucosa of transverse colon and 178 other cell types or tissues"/>
</dbReference>
<dbReference type="ExpressionAtlas" id="Q9H9Y4">
    <property type="expression patterns" value="baseline and differential"/>
</dbReference>
<dbReference type="GO" id="GO:0005525">
    <property type="term" value="F:GTP binding"/>
    <property type="evidence" value="ECO:0007669"/>
    <property type="project" value="UniProtKB-KW"/>
</dbReference>
<dbReference type="GO" id="GO:0003924">
    <property type="term" value="F:GTPase activity"/>
    <property type="evidence" value="ECO:0000318"/>
    <property type="project" value="GO_Central"/>
</dbReference>
<dbReference type="CDD" id="cd17871">
    <property type="entry name" value="GPN2"/>
    <property type="match status" value="1"/>
</dbReference>
<dbReference type="FunFam" id="3.40.50.300:FF:000338">
    <property type="entry name" value="GPN-loop GTPase 2"/>
    <property type="match status" value="1"/>
</dbReference>
<dbReference type="Gene3D" id="3.40.50.300">
    <property type="entry name" value="P-loop containing nucleotide triphosphate hydrolases"/>
    <property type="match status" value="1"/>
</dbReference>
<dbReference type="InterPro" id="IPR004130">
    <property type="entry name" value="Gpn"/>
</dbReference>
<dbReference type="InterPro" id="IPR030231">
    <property type="entry name" value="Gpn2"/>
</dbReference>
<dbReference type="InterPro" id="IPR027417">
    <property type="entry name" value="P-loop_NTPase"/>
</dbReference>
<dbReference type="PANTHER" id="PTHR21231:SF3">
    <property type="entry name" value="GPN-LOOP GTPASE 2"/>
    <property type="match status" value="1"/>
</dbReference>
<dbReference type="PANTHER" id="PTHR21231">
    <property type="entry name" value="XPA-BINDING PROTEIN 1-RELATED"/>
    <property type="match status" value="1"/>
</dbReference>
<dbReference type="Pfam" id="PF03029">
    <property type="entry name" value="ATP_bind_1"/>
    <property type="match status" value="1"/>
</dbReference>
<dbReference type="SUPFAM" id="SSF52540">
    <property type="entry name" value="P-loop containing nucleoside triphosphate hydrolases"/>
    <property type="match status" value="1"/>
</dbReference>
<comment type="function">
    <text evidence="1">Small GTPase required for proper localization of RNA polymerase II and III (RNAPII and RNAPIII). May act at an RNAP assembly step prior to nuclear import.</text>
</comment>
<comment type="subunit">
    <text evidence="1 6">Heterodimers with GPN1 or GPN3 (By similarity). Binds to RNA polymerase II (RNAPII) (PubMed:20864038).</text>
</comment>
<comment type="interaction">
    <interactant intactId="EBI-11603368">
        <id>Q9H9Y4</id>
    </interactant>
    <interactant intactId="EBI-745137">
        <id>Q9HCN4</id>
        <label>GPN1</label>
    </interactant>
    <organismsDiffer>false</organismsDiffer>
    <experiments>6</experiments>
</comment>
<comment type="interaction">
    <interactant intactId="EBI-11603368">
        <id>Q9H9Y4</id>
    </interactant>
    <interactant intactId="EBI-948266">
        <id>O14901</id>
        <label>KLF11</label>
    </interactant>
    <organismsDiffer>false</organismsDiffer>
    <experiments>3</experiments>
</comment>
<comment type="similarity">
    <text evidence="8">Belongs to the GPN-loop GTPase family.</text>
</comment>
<reference key="1">
    <citation type="journal article" date="2006" name="BMC Genomics">
        <title>NovelFam3000 -- uncharacterized human protein domains conserved across model organisms.</title>
        <authorList>
            <person name="Kemmer D."/>
            <person name="Podowski R.M."/>
            <person name="Arenillas D."/>
            <person name="Lim J."/>
            <person name="Hodges E."/>
            <person name="Roth P."/>
            <person name="Sonnhammer E.L.L."/>
            <person name="Hoeoeg C."/>
            <person name="Wasserman W.W."/>
        </authorList>
    </citation>
    <scope>NUCLEOTIDE SEQUENCE [MRNA]</scope>
</reference>
<reference key="2">
    <citation type="journal article" date="2003" name="Genome Res.">
        <title>The secreted protein discovery initiative (SPDI), a large-scale effort to identify novel human secreted and transmembrane proteins: a bioinformatics assessment.</title>
        <authorList>
            <person name="Clark H.F."/>
            <person name="Gurney A.L."/>
            <person name="Abaya E."/>
            <person name="Baker K."/>
            <person name="Baldwin D.T."/>
            <person name="Brush J."/>
            <person name="Chen J."/>
            <person name="Chow B."/>
            <person name="Chui C."/>
            <person name="Crowley C."/>
            <person name="Currell B."/>
            <person name="Deuel B."/>
            <person name="Dowd P."/>
            <person name="Eaton D."/>
            <person name="Foster J.S."/>
            <person name="Grimaldi C."/>
            <person name="Gu Q."/>
            <person name="Hass P.E."/>
            <person name="Heldens S."/>
            <person name="Huang A."/>
            <person name="Kim H.S."/>
            <person name="Klimowski L."/>
            <person name="Jin Y."/>
            <person name="Johnson S."/>
            <person name="Lee J."/>
            <person name="Lewis L."/>
            <person name="Liao D."/>
            <person name="Mark M.R."/>
            <person name="Robbie E."/>
            <person name="Sanchez C."/>
            <person name="Schoenfeld J."/>
            <person name="Seshagiri S."/>
            <person name="Simmons L."/>
            <person name="Singh J."/>
            <person name="Smith V."/>
            <person name="Stinson J."/>
            <person name="Vagts A."/>
            <person name="Vandlen R.L."/>
            <person name="Watanabe C."/>
            <person name="Wieand D."/>
            <person name="Woods K."/>
            <person name="Xie M.-H."/>
            <person name="Yansura D.G."/>
            <person name="Yi S."/>
            <person name="Yu G."/>
            <person name="Yuan J."/>
            <person name="Zhang M."/>
            <person name="Zhang Z."/>
            <person name="Goddard A.D."/>
            <person name="Wood W.I."/>
            <person name="Godowski P.J."/>
            <person name="Gray A.M."/>
        </authorList>
    </citation>
    <scope>NUCLEOTIDE SEQUENCE [LARGE SCALE MRNA]</scope>
    <scope>VARIANT GLY-264</scope>
</reference>
<reference key="3">
    <citation type="journal article" date="2004" name="Nat. Genet.">
        <title>Complete sequencing and characterization of 21,243 full-length human cDNAs.</title>
        <authorList>
            <person name="Ota T."/>
            <person name="Suzuki Y."/>
            <person name="Nishikawa T."/>
            <person name="Otsuki T."/>
            <person name="Sugiyama T."/>
            <person name="Irie R."/>
            <person name="Wakamatsu A."/>
            <person name="Hayashi K."/>
            <person name="Sato H."/>
            <person name="Nagai K."/>
            <person name="Kimura K."/>
            <person name="Makita H."/>
            <person name="Sekine M."/>
            <person name="Obayashi M."/>
            <person name="Nishi T."/>
            <person name="Shibahara T."/>
            <person name="Tanaka T."/>
            <person name="Ishii S."/>
            <person name="Yamamoto J."/>
            <person name="Saito K."/>
            <person name="Kawai Y."/>
            <person name="Isono Y."/>
            <person name="Nakamura Y."/>
            <person name="Nagahari K."/>
            <person name="Murakami K."/>
            <person name="Yasuda T."/>
            <person name="Iwayanagi T."/>
            <person name="Wagatsuma M."/>
            <person name="Shiratori A."/>
            <person name="Sudo H."/>
            <person name="Hosoiri T."/>
            <person name="Kaku Y."/>
            <person name="Kodaira H."/>
            <person name="Kondo H."/>
            <person name="Sugawara M."/>
            <person name="Takahashi M."/>
            <person name="Kanda K."/>
            <person name="Yokoi T."/>
            <person name="Furuya T."/>
            <person name="Kikkawa E."/>
            <person name="Omura Y."/>
            <person name="Abe K."/>
            <person name="Kamihara K."/>
            <person name="Katsuta N."/>
            <person name="Sato K."/>
            <person name="Tanikawa M."/>
            <person name="Yamazaki M."/>
            <person name="Ninomiya K."/>
            <person name="Ishibashi T."/>
            <person name="Yamashita H."/>
            <person name="Murakawa K."/>
            <person name="Fujimori K."/>
            <person name="Tanai H."/>
            <person name="Kimata M."/>
            <person name="Watanabe M."/>
            <person name="Hiraoka S."/>
            <person name="Chiba Y."/>
            <person name="Ishida S."/>
            <person name="Ono Y."/>
            <person name="Takiguchi S."/>
            <person name="Watanabe S."/>
            <person name="Yosida M."/>
            <person name="Hotuta T."/>
            <person name="Kusano J."/>
            <person name="Kanehori K."/>
            <person name="Takahashi-Fujii A."/>
            <person name="Hara H."/>
            <person name="Tanase T.-O."/>
            <person name="Nomura Y."/>
            <person name="Togiya S."/>
            <person name="Komai F."/>
            <person name="Hara R."/>
            <person name="Takeuchi K."/>
            <person name="Arita M."/>
            <person name="Imose N."/>
            <person name="Musashino K."/>
            <person name="Yuuki H."/>
            <person name="Oshima A."/>
            <person name="Sasaki N."/>
            <person name="Aotsuka S."/>
            <person name="Yoshikawa Y."/>
            <person name="Matsunawa H."/>
            <person name="Ichihara T."/>
            <person name="Shiohata N."/>
            <person name="Sano S."/>
            <person name="Moriya S."/>
            <person name="Momiyama H."/>
            <person name="Satoh N."/>
            <person name="Takami S."/>
            <person name="Terashima Y."/>
            <person name="Suzuki O."/>
            <person name="Nakagawa S."/>
            <person name="Senoh A."/>
            <person name="Mizoguchi H."/>
            <person name="Goto Y."/>
            <person name="Shimizu F."/>
            <person name="Wakebe H."/>
            <person name="Hishigaki H."/>
            <person name="Watanabe T."/>
            <person name="Sugiyama A."/>
            <person name="Takemoto M."/>
            <person name="Kawakami B."/>
            <person name="Yamazaki M."/>
            <person name="Watanabe K."/>
            <person name="Kumagai A."/>
            <person name="Itakura S."/>
            <person name="Fukuzumi Y."/>
            <person name="Fujimori Y."/>
            <person name="Komiyama M."/>
            <person name="Tashiro H."/>
            <person name="Tanigami A."/>
            <person name="Fujiwara T."/>
            <person name="Ono T."/>
            <person name="Yamada K."/>
            <person name="Fujii Y."/>
            <person name="Ozaki K."/>
            <person name="Hirao M."/>
            <person name="Ohmori Y."/>
            <person name="Kawabata A."/>
            <person name="Hikiji T."/>
            <person name="Kobatake N."/>
            <person name="Inagaki H."/>
            <person name="Ikema Y."/>
            <person name="Okamoto S."/>
            <person name="Okitani R."/>
            <person name="Kawakami T."/>
            <person name="Noguchi S."/>
            <person name="Itoh T."/>
            <person name="Shigeta K."/>
            <person name="Senba T."/>
            <person name="Matsumura K."/>
            <person name="Nakajima Y."/>
            <person name="Mizuno T."/>
            <person name="Morinaga M."/>
            <person name="Sasaki M."/>
            <person name="Togashi T."/>
            <person name="Oyama M."/>
            <person name="Hata H."/>
            <person name="Watanabe M."/>
            <person name="Komatsu T."/>
            <person name="Mizushima-Sugano J."/>
            <person name="Satoh T."/>
            <person name="Shirai Y."/>
            <person name="Takahashi Y."/>
            <person name="Nakagawa K."/>
            <person name="Okumura K."/>
            <person name="Nagase T."/>
            <person name="Nomura N."/>
            <person name="Kikuchi H."/>
            <person name="Masuho Y."/>
            <person name="Yamashita R."/>
            <person name="Nakai K."/>
            <person name="Yada T."/>
            <person name="Nakamura Y."/>
            <person name="Ohara O."/>
            <person name="Isogai T."/>
            <person name="Sugano S."/>
        </authorList>
    </citation>
    <scope>NUCLEOTIDE SEQUENCE [LARGE SCALE MRNA]</scope>
    <scope>VARIANT GLY-264</scope>
</reference>
<reference key="4">
    <citation type="journal article" date="2006" name="Nature">
        <title>The DNA sequence and biological annotation of human chromosome 1.</title>
        <authorList>
            <person name="Gregory S.G."/>
            <person name="Barlow K.F."/>
            <person name="McLay K.E."/>
            <person name="Kaul R."/>
            <person name="Swarbreck D."/>
            <person name="Dunham A."/>
            <person name="Scott C.E."/>
            <person name="Howe K.L."/>
            <person name="Woodfine K."/>
            <person name="Spencer C.C.A."/>
            <person name="Jones M.C."/>
            <person name="Gillson C."/>
            <person name="Searle S."/>
            <person name="Zhou Y."/>
            <person name="Kokocinski F."/>
            <person name="McDonald L."/>
            <person name="Evans R."/>
            <person name="Phillips K."/>
            <person name="Atkinson A."/>
            <person name="Cooper R."/>
            <person name="Jones C."/>
            <person name="Hall R.E."/>
            <person name="Andrews T.D."/>
            <person name="Lloyd C."/>
            <person name="Ainscough R."/>
            <person name="Almeida J.P."/>
            <person name="Ambrose K.D."/>
            <person name="Anderson F."/>
            <person name="Andrew R.W."/>
            <person name="Ashwell R.I.S."/>
            <person name="Aubin K."/>
            <person name="Babbage A.K."/>
            <person name="Bagguley C.L."/>
            <person name="Bailey J."/>
            <person name="Beasley H."/>
            <person name="Bethel G."/>
            <person name="Bird C.P."/>
            <person name="Bray-Allen S."/>
            <person name="Brown J.Y."/>
            <person name="Brown A.J."/>
            <person name="Buckley D."/>
            <person name="Burton J."/>
            <person name="Bye J."/>
            <person name="Carder C."/>
            <person name="Chapman J.C."/>
            <person name="Clark S.Y."/>
            <person name="Clarke G."/>
            <person name="Clee C."/>
            <person name="Cobley V."/>
            <person name="Collier R.E."/>
            <person name="Corby N."/>
            <person name="Coville G.J."/>
            <person name="Davies J."/>
            <person name="Deadman R."/>
            <person name="Dunn M."/>
            <person name="Earthrowl M."/>
            <person name="Ellington A.G."/>
            <person name="Errington H."/>
            <person name="Frankish A."/>
            <person name="Frankland J."/>
            <person name="French L."/>
            <person name="Garner P."/>
            <person name="Garnett J."/>
            <person name="Gay L."/>
            <person name="Ghori M.R.J."/>
            <person name="Gibson R."/>
            <person name="Gilby L.M."/>
            <person name="Gillett W."/>
            <person name="Glithero R.J."/>
            <person name="Grafham D.V."/>
            <person name="Griffiths C."/>
            <person name="Griffiths-Jones S."/>
            <person name="Grocock R."/>
            <person name="Hammond S."/>
            <person name="Harrison E.S.I."/>
            <person name="Hart E."/>
            <person name="Haugen E."/>
            <person name="Heath P.D."/>
            <person name="Holmes S."/>
            <person name="Holt K."/>
            <person name="Howden P.J."/>
            <person name="Hunt A.R."/>
            <person name="Hunt S.E."/>
            <person name="Hunter G."/>
            <person name="Isherwood J."/>
            <person name="James R."/>
            <person name="Johnson C."/>
            <person name="Johnson D."/>
            <person name="Joy A."/>
            <person name="Kay M."/>
            <person name="Kershaw J.K."/>
            <person name="Kibukawa M."/>
            <person name="Kimberley A.M."/>
            <person name="King A."/>
            <person name="Knights A.J."/>
            <person name="Lad H."/>
            <person name="Laird G."/>
            <person name="Lawlor S."/>
            <person name="Leongamornlert D.A."/>
            <person name="Lloyd D.M."/>
            <person name="Loveland J."/>
            <person name="Lovell J."/>
            <person name="Lush M.J."/>
            <person name="Lyne R."/>
            <person name="Martin S."/>
            <person name="Mashreghi-Mohammadi M."/>
            <person name="Matthews L."/>
            <person name="Matthews N.S.W."/>
            <person name="McLaren S."/>
            <person name="Milne S."/>
            <person name="Mistry S."/>
            <person name="Moore M.J.F."/>
            <person name="Nickerson T."/>
            <person name="O'Dell C.N."/>
            <person name="Oliver K."/>
            <person name="Palmeiri A."/>
            <person name="Palmer S.A."/>
            <person name="Parker A."/>
            <person name="Patel D."/>
            <person name="Pearce A.V."/>
            <person name="Peck A.I."/>
            <person name="Pelan S."/>
            <person name="Phelps K."/>
            <person name="Phillimore B.J."/>
            <person name="Plumb R."/>
            <person name="Rajan J."/>
            <person name="Raymond C."/>
            <person name="Rouse G."/>
            <person name="Saenphimmachak C."/>
            <person name="Sehra H.K."/>
            <person name="Sheridan E."/>
            <person name="Shownkeen R."/>
            <person name="Sims S."/>
            <person name="Skuce C.D."/>
            <person name="Smith M."/>
            <person name="Steward C."/>
            <person name="Subramanian S."/>
            <person name="Sycamore N."/>
            <person name="Tracey A."/>
            <person name="Tromans A."/>
            <person name="Van Helmond Z."/>
            <person name="Wall M."/>
            <person name="Wallis J.M."/>
            <person name="White S."/>
            <person name="Whitehead S.L."/>
            <person name="Wilkinson J.E."/>
            <person name="Willey D.L."/>
            <person name="Williams H."/>
            <person name="Wilming L."/>
            <person name="Wray P.W."/>
            <person name="Wu Z."/>
            <person name="Coulson A."/>
            <person name="Vaudin M."/>
            <person name="Sulston J.E."/>
            <person name="Durbin R.M."/>
            <person name="Hubbard T."/>
            <person name="Wooster R."/>
            <person name="Dunham I."/>
            <person name="Carter N.P."/>
            <person name="McVean G."/>
            <person name="Ross M.T."/>
            <person name="Harrow J."/>
            <person name="Olson M.V."/>
            <person name="Beck S."/>
            <person name="Rogers J."/>
            <person name="Bentley D.R."/>
        </authorList>
    </citation>
    <scope>NUCLEOTIDE SEQUENCE [LARGE SCALE GENOMIC DNA]</scope>
</reference>
<reference key="5">
    <citation type="journal article" date="2004" name="Genome Res.">
        <title>The status, quality, and expansion of the NIH full-length cDNA project: the Mammalian Gene Collection (MGC).</title>
        <authorList>
            <consortium name="The MGC Project Team"/>
        </authorList>
    </citation>
    <scope>NUCLEOTIDE SEQUENCE [LARGE SCALE MRNA]</scope>
    <scope>VARIANTS ARG-227 AND GLY-264</scope>
    <source>
        <tissue>Cervix</tissue>
        <tissue>Eye</tissue>
    </source>
</reference>
<reference key="6">
    <citation type="journal article" date="2010" name="Mol. Cell">
        <title>HSP90 and its R2TP/Prefoldin-like cochaperone are involved in the cytoplasmic assembly of RNA polymerase II.</title>
        <authorList>
            <person name="Boulon S."/>
            <person name="Pradet-Balade B."/>
            <person name="Verheggen C."/>
            <person name="Molle D."/>
            <person name="Boireau S."/>
            <person name="Georgieva M."/>
            <person name="Azzag K."/>
            <person name="Robert M.C."/>
            <person name="Ahmad Y."/>
            <person name="Neel H."/>
            <person name="Lamond A.I."/>
            <person name="Bertrand E."/>
        </authorList>
    </citation>
    <scope>BINDING TO RNA POLYMERASE II</scope>
</reference>
<reference key="7">
    <citation type="journal article" date="2012" name="Mol. Cell. Proteomics">
        <title>Comparative large-scale characterisation of plant vs. mammal proteins reveals similar and idiosyncratic N-alpha acetylation features.</title>
        <authorList>
            <person name="Bienvenut W.V."/>
            <person name="Sumpton D."/>
            <person name="Martinez A."/>
            <person name="Lilla S."/>
            <person name="Espagne C."/>
            <person name="Meinnel T."/>
            <person name="Giglione C."/>
        </authorList>
    </citation>
    <scope>ACETYLATION [LARGE SCALE ANALYSIS] AT ALA-2</scope>
    <scope>CLEAVAGE OF INITIATOR METHIONINE [LARGE SCALE ANALYSIS]</scope>
    <scope>IDENTIFICATION BY MASS SPECTROMETRY [LARGE SCALE ANALYSIS]</scope>
</reference>
<keyword id="KW-0007">Acetylation</keyword>
<keyword id="KW-0342">GTP-binding</keyword>
<keyword id="KW-0378">Hydrolase</keyword>
<keyword id="KW-0547">Nucleotide-binding</keyword>
<keyword id="KW-1267">Proteomics identification</keyword>
<keyword id="KW-1185">Reference proteome</keyword>
<accession>Q9H9Y4</accession>
<accession>Q96HG4</accession>
<accession>Q9NUE1</accession>
<accession>Q9NW30</accession>
<sequence length="310" mass="34561">MAGAAPTTAFGQAVIGPPGSGKTTYCLGMSEFLRALGRRVAVVNLDPANEGLPYECAVDVGELVGLGDVMDALRLGPNGGLLYCMEYLEANLDWLRAKLDPLRGHYFLFDCPGQVELCTHHGALRSIFSQMAQWDLRLTAVHLVDSHYCTDPAKFISVLCTSLATMLHVELPHINLLSKMDLIEHYGKLAFNLDYYTEVLDLSYLLDHLASDPFFRHYRQLNEKLVQLIEDYSLVSFIPLNIQDKESIQRVLQAVDKANGYCFRAQEQRSLEAMMSAAMGADFHFSSTLGIQEKYLAPSNQSVEQEAMQL</sequence>
<gene>
    <name evidence="7 9" type="primary">GPN2</name>
    <name type="synonym">ATPBD1B</name>
    <name type="ORF">UNQ5828/PRO19647</name>
</gene>
<feature type="initiator methionine" description="Removed" evidence="10">
    <location>
        <position position="1"/>
    </location>
</feature>
<feature type="chain" id="PRO_0000247829" description="GPN-loop GTPase 2">
    <location>
        <begin position="2"/>
        <end position="310"/>
    </location>
</feature>
<feature type="short sequence motif" description="Gly-Pro-Asn (GPN)-loop; involved in dimer interface" evidence="2">
    <location>
        <begin position="76"/>
        <end position="78"/>
    </location>
</feature>
<feature type="binding site" evidence="2">
    <location>
        <begin position="19"/>
        <end position="24"/>
    </location>
    <ligand>
        <name>GTP</name>
        <dbReference type="ChEBI" id="CHEBI:37565"/>
    </ligand>
</feature>
<feature type="binding site" evidence="2">
    <location>
        <begin position="178"/>
        <end position="181"/>
    </location>
    <ligand>
        <name>GTP</name>
        <dbReference type="ChEBI" id="CHEBI:37565"/>
    </ligand>
</feature>
<feature type="site" description="Stabilizes the phosphate intermediate; shared with dimeric partner" evidence="2">
    <location>
        <position position="78"/>
    </location>
</feature>
<feature type="modified residue" description="N-acetylalanine" evidence="10">
    <location>
        <position position="2"/>
    </location>
</feature>
<feature type="sequence variant" id="VAR_027153" description="In dbSNP:rs17856257." evidence="5">
    <original>Q</original>
    <variation>R</variation>
    <location>
        <position position="227"/>
    </location>
</feature>
<feature type="sequence variant" id="VAR_027154" description="In dbSNP:rs3170660." evidence="3 4 5">
    <original>R</original>
    <variation>G</variation>
    <location>
        <position position="264"/>
    </location>
</feature>
<feature type="sequence conflict" description="In Ref. 1; AAQ76820 and 3; BAA91556." evidence="8" ref="1 3">
    <original>I</original>
    <variation>T</variation>
    <location>
        <position position="15"/>
    </location>
</feature>
<proteinExistence type="evidence at protein level"/>
<protein>
    <recommendedName>
        <fullName evidence="8">GPN-loop GTPase 2</fullName>
    </recommendedName>
    <alternativeName>
        <fullName>ATP-binding domain 1 family member B</fullName>
    </alternativeName>
</protein>
<name>GPN2_HUMAN</name>
<evidence type="ECO:0000250" key="1">
    <source>
        <dbReference type="UniProtKB" id="Q08726"/>
    </source>
</evidence>
<evidence type="ECO:0000250" key="2">
    <source>
        <dbReference type="UniProtKB" id="Q9UYR9"/>
    </source>
</evidence>
<evidence type="ECO:0000269" key="3">
    <source>
    </source>
</evidence>
<evidence type="ECO:0000269" key="4">
    <source>
    </source>
</evidence>
<evidence type="ECO:0000269" key="5">
    <source>
    </source>
</evidence>
<evidence type="ECO:0000269" key="6">
    <source>
    </source>
</evidence>
<evidence type="ECO:0000303" key="7">
    <source>
    </source>
</evidence>
<evidence type="ECO:0000305" key="8"/>
<evidence type="ECO:0000312" key="9">
    <source>
        <dbReference type="HGNC" id="HGNC:25513"/>
    </source>
</evidence>
<evidence type="ECO:0007744" key="10">
    <source>
    </source>
</evidence>